<feature type="chain" id="PRO_1000009505" description="tRNA-specific 2-thiouridylase MnmA">
    <location>
        <begin position="1"/>
        <end position="379"/>
    </location>
</feature>
<feature type="region of interest" description="Interaction with tRNA" evidence="1">
    <location>
        <begin position="148"/>
        <end position="150"/>
    </location>
</feature>
<feature type="active site" description="Nucleophile" evidence="1">
    <location>
        <position position="101"/>
    </location>
</feature>
<feature type="active site" description="Cysteine persulfide intermediate" evidence="1">
    <location>
        <position position="199"/>
    </location>
</feature>
<feature type="binding site" evidence="1">
    <location>
        <begin position="6"/>
        <end position="13"/>
    </location>
    <ligand>
        <name>ATP</name>
        <dbReference type="ChEBI" id="CHEBI:30616"/>
    </ligand>
</feature>
<feature type="binding site" evidence="1">
    <location>
        <position position="32"/>
    </location>
    <ligand>
        <name>ATP</name>
        <dbReference type="ChEBI" id="CHEBI:30616"/>
    </ligand>
</feature>
<feature type="binding site" evidence="1">
    <location>
        <position position="125"/>
    </location>
    <ligand>
        <name>ATP</name>
        <dbReference type="ChEBI" id="CHEBI:30616"/>
    </ligand>
</feature>
<feature type="site" description="Interaction with tRNA" evidence="1">
    <location>
        <position position="126"/>
    </location>
</feature>
<feature type="site" description="Interaction with tRNA" evidence="1">
    <location>
        <position position="352"/>
    </location>
</feature>
<feature type="disulfide bond" description="Alternate" evidence="1">
    <location>
        <begin position="101"/>
        <end position="199"/>
    </location>
</feature>
<organism>
    <name type="scientific">Arthrobacter sp. (strain FB24)</name>
    <dbReference type="NCBI Taxonomy" id="290399"/>
    <lineage>
        <taxon>Bacteria</taxon>
        <taxon>Bacillati</taxon>
        <taxon>Actinomycetota</taxon>
        <taxon>Actinomycetes</taxon>
        <taxon>Micrococcales</taxon>
        <taxon>Micrococcaceae</taxon>
        <taxon>Arthrobacter</taxon>
    </lineage>
</organism>
<accession>A0JYI6</accession>
<protein>
    <recommendedName>
        <fullName evidence="1">tRNA-specific 2-thiouridylase MnmA</fullName>
        <ecNumber evidence="1">2.8.1.13</ecNumber>
    </recommendedName>
</protein>
<dbReference type="EC" id="2.8.1.13" evidence="1"/>
<dbReference type="EMBL" id="CP000454">
    <property type="protein sequence ID" value="ABK04106.1"/>
    <property type="molecule type" value="Genomic_DNA"/>
</dbReference>
<dbReference type="RefSeq" id="WP_011692567.1">
    <property type="nucleotide sequence ID" value="NC_008541.1"/>
</dbReference>
<dbReference type="SMR" id="A0JYI6"/>
<dbReference type="STRING" id="290399.Arth_2727"/>
<dbReference type="DNASU" id="4444592"/>
<dbReference type="KEGG" id="art:Arth_2727"/>
<dbReference type="eggNOG" id="COG0482">
    <property type="taxonomic scope" value="Bacteria"/>
</dbReference>
<dbReference type="HOGENOM" id="CLU_035188_0_2_11"/>
<dbReference type="OrthoDB" id="9800696at2"/>
<dbReference type="Proteomes" id="UP000000754">
    <property type="component" value="Chromosome"/>
</dbReference>
<dbReference type="GO" id="GO:0005737">
    <property type="term" value="C:cytoplasm"/>
    <property type="evidence" value="ECO:0007669"/>
    <property type="project" value="UniProtKB-SubCell"/>
</dbReference>
<dbReference type="GO" id="GO:0005524">
    <property type="term" value="F:ATP binding"/>
    <property type="evidence" value="ECO:0007669"/>
    <property type="project" value="UniProtKB-KW"/>
</dbReference>
<dbReference type="GO" id="GO:0000049">
    <property type="term" value="F:tRNA binding"/>
    <property type="evidence" value="ECO:0007669"/>
    <property type="project" value="UniProtKB-KW"/>
</dbReference>
<dbReference type="GO" id="GO:0103016">
    <property type="term" value="F:tRNA-uridine 2-sulfurtransferase activity"/>
    <property type="evidence" value="ECO:0007669"/>
    <property type="project" value="UniProtKB-EC"/>
</dbReference>
<dbReference type="GO" id="GO:0002143">
    <property type="term" value="P:tRNA wobble position uridine thiolation"/>
    <property type="evidence" value="ECO:0007669"/>
    <property type="project" value="TreeGrafter"/>
</dbReference>
<dbReference type="CDD" id="cd01998">
    <property type="entry name" value="MnmA_TRMU-like"/>
    <property type="match status" value="1"/>
</dbReference>
<dbReference type="FunFam" id="3.40.50.620:FF:000057">
    <property type="entry name" value="tRNA-specific 2-thiouridylase MnmA"/>
    <property type="match status" value="1"/>
</dbReference>
<dbReference type="Gene3D" id="2.30.30.280">
    <property type="entry name" value="Adenine nucleotide alpha hydrolases-like domains"/>
    <property type="match status" value="1"/>
</dbReference>
<dbReference type="Gene3D" id="3.40.50.620">
    <property type="entry name" value="HUPs"/>
    <property type="match status" value="1"/>
</dbReference>
<dbReference type="Gene3D" id="2.40.30.10">
    <property type="entry name" value="Translation factors"/>
    <property type="match status" value="1"/>
</dbReference>
<dbReference type="HAMAP" id="MF_00144">
    <property type="entry name" value="tRNA_thiouridyl_MnmA"/>
    <property type="match status" value="1"/>
</dbReference>
<dbReference type="InterPro" id="IPR004506">
    <property type="entry name" value="MnmA-like"/>
</dbReference>
<dbReference type="InterPro" id="IPR046885">
    <property type="entry name" value="MnmA-like_C"/>
</dbReference>
<dbReference type="InterPro" id="IPR046884">
    <property type="entry name" value="MnmA-like_central"/>
</dbReference>
<dbReference type="InterPro" id="IPR023382">
    <property type="entry name" value="MnmA-like_central_sf"/>
</dbReference>
<dbReference type="InterPro" id="IPR014729">
    <property type="entry name" value="Rossmann-like_a/b/a_fold"/>
</dbReference>
<dbReference type="NCBIfam" id="NF001138">
    <property type="entry name" value="PRK00143.1"/>
    <property type="match status" value="1"/>
</dbReference>
<dbReference type="NCBIfam" id="TIGR00420">
    <property type="entry name" value="trmU"/>
    <property type="match status" value="1"/>
</dbReference>
<dbReference type="PANTHER" id="PTHR11933:SF5">
    <property type="entry name" value="MITOCHONDRIAL TRNA-SPECIFIC 2-THIOURIDYLASE 1"/>
    <property type="match status" value="1"/>
</dbReference>
<dbReference type="PANTHER" id="PTHR11933">
    <property type="entry name" value="TRNA 5-METHYLAMINOMETHYL-2-THIOURIDYLATE -METHYLTRANSFERASE"/>
    <property type="match status" value="1"/>
</dbReference>
<dbReference type="Pfam" id="PF03054">
    <property type="entry name" value="tRNA_Me_trans"/>
    <property type="match status" value="1"/>
</dbReference>
<dbReference type="Pfam" id="PF20258">
    <property type="entry name" value="tRNA_Me_trans_C"/>
    <property type="match status" value="1"/>
</dbReference>
<dbReference type="Pfam" id="PF20259">
    <property type="entry name" value="tRNA_Me_trans_M"/>
    <property type="match status" value="1"/>
</dbReference>
<dbReference type="SUPFAM" id="SSF52402">
    <property type="entry name" value="Adenine nucleotide alpha hydrolases-like"/>
    <property type="match status" value="1"/>
</dbReference>
<name>MNMA_ARTS2</name>
<evidence type="ECO:0000255" key="1">
    <source>
        <dbReference type="HAMAP-Rule" id="MF_00144"/>
    </source>
</evidence>
<reference key="1">
    <citation type="journal article" date="2013" name="Stand. Genomic Sci.">
        <title>Complete genome sequence of Arthrobacter sp. strain FB24.</title>
        <authorList>
            <person name="Nakatsu C.H."/>
            <person name="Barabote R."/>
            <person name="Thompson S."/>
            <person name="Bruce D."/>
            <person name="Detter C."/>
            <person name="Brettin T."/>
            <person name="Han C."/>
            <person name="Beasley F."/>
            <person name="Chen W."/>
            <person name="Konopka A."/>
            <person name="Xie G."/>
        </authorList>
    </citation>
    <scope>NUCLEOTIDE SEQUENCE [LARGE SCALE GENOMIC DNA]</scope>
    <source>
        <strain>FB24</strain>
    </source>
</reference>
<gene>
    <name evidence="1" type="primary">mnmA</name>
    <name type="synonym">trmU</name>
    <name type="ordered locus">Arth_2727</name>
</gene>
<keyword id="KW-0067">ATP-binding</keyword>
<keyword id="KW-0963">Cytoplasm</keyword>
<keyword id="KW-1015">Disulfide bond</keyword>
<keyword id="KW-0547">Nucleotide-binding</keyword>
<keyword id="KW-1185">Reference proteome</keyword>
<keyword id="KW-0694">RNA-binding</keyword>
<keyword id="KW-0808">Transferase</keyword>
<keyword id="KW-0819">tRNA processing</keyword>
<keyword id="KW-0820">tRNA-binding</keyword>
<sequence length="379" mass="40731">MRVLAAMSGGVDSAVAAARAVEAGHDVVGVHLALSRMPGTLRTGSRGCCTIEDSRDAWRACDVLGIPYYVWDFSERFKEDVVQDFIDEYAAGRTPNPCMRCNERIKFAALLEKAIALGFDAVCTGHYAKVITDADGNPELHRAADWAKDQSYVLGVLTHEQLKHSMFPLADTPSKAEVRAEAERRGLSVANKPDSHDICFIPDGDTAGWLAEKIEMTTGDIVDEAGTKVGEHPGANAFTVGQRRGLKLGTPAADGKPRFVLEIRPKENKVVVGPEALLAIDEIRGIKVSWAGLPIAEVATGDEFDCHAQVRAHGDPVPATARMERLTDDDGAERTNLVVTLATPLRGVAPGQTVVLYQGSRVLGQATIDTARSLQRAAL</sequence>
<proteinExistence type="inferred from homology"/>
<comment type="function">
    <text evidence="1">Catalyzes the 2-thiolation of uridine at the wobble position (U34) of tRNA, leading to the formation of s(2)U34.</text>
</comment>
<comment type="catalytic activity">
    <reaction evidence="1">
        <text>S-sulfanyl-L-cysteinyl-[protein] + uridine(34) in tRNA + AH2 + ATP = 2-thiouridine(34) in tRNA + L-cysteinyl-[protein] + A + AMP + diphosphate + H(+)</text>
        <dbReference type="Rhea" id="RHEA:47032"/>
        <dbReference type="Rhea" id="RHEA-COMP:10131"/>
        <dbReference type="Rhea" id="RHEA-COMP:11726"/>
        <dbReference type="Rhea" id="RHEA-COMP:11727"/>
        <dbReference type="Rhea" id="RHEA-COMP:11728"/>
        <dbReference type="ChEBI" id="CHEBI:13193"/>
        <dbReference type="ChEBI" id="CHEBI:15378"/>
        <dbReference type="ChEBI" id="CHEBI:17499"/>
        <dbReference type="ChEBI" id="CHEBI:29950"/>
        <dbReference type="ChEBI" id="CHEBI:30616"/>
        <dbReference type="ChEBI" id="CHEBI:33019"/>
        <dbReference type="ChEBI" id="CHEBI:61963"/>
        <dbReference type="ChEBI" id="CHEBI:65315"/>
        <dbReference type="ChEBI" id="CHEBI:87170"/>
        <dbReference type="ChEBI" id="CHEBI:456215"/>
        <dbReference type="EC" id="2.8.1.13"/>
    </reaction>
</comment>
<comment type="subcellular location">
    <subcellularLocation>
        <location evidence="1">Cytoplasm</location>
    </subcellularLocation>
</comment>
<comment type="similarity">
    <text evidence="1">Belongs to the MnmA/TRMU family.</text>
</comment>